<gene>
    <name evidence="1" type="primary">ispH</name>
    <name type="ordered locus">SPC_0052</name>
</gene>
<sequence length="316" mass="34511">MQILLANPRGFCAGVDRAISIVENALAIYGAPIYVRHEVVHNRYVVDSLRQRGAIFIEQISEVPDGAILIFSAHGVSQAVRNEAKSRDLTVFDATCPLVTKVHMEVARASRRGEEAILIGHAGHPEVEGTMGQYSNPEGGMYLVESPEDVWTLNVKNEGKLSFMTQTTLSVDDTSDVIDALRKRFPKIVGPRKDDICYATTNRQEAVRALAEQADVVLVVGSKNSSNSNRLAELAQRMGRTAFLIDDAADIQEAWVKEAACVGVTAGASAPDILVQNVIARLREFGGGEAVTLEGREENIVFEVPKELRVDVREVE</sequence>
<name>ISPH_SALPC</name>
<feature type="chain" id="PRO_1000124292" description="4-hydroxy-3-methylbut-2-enyl diphosphate reductase">
    <location>
        <begin position="1"/>
        <end position="316"/>
    </location>
</feature>
<feature type="active site" description="Proton donor" evidence="1">
    <location>
        <position position="126"/>
    </location>
</feature>
<feature type="binding site" evidence="1">
    <location>
        <position position="12"/>
    </location>
    <ligand>
        <name>[4Fe-4S] cluster</name>
        <dbReference type="ChEBI" id="CHEBI:49883"/>
    </ligand>
</feature>
<feature type="binding site" evidence="1">
    <location>
        <position position="41"/>
    </location>
    <ligand>
        <name>(2E)-4-hydroxy-3-methylbut-2-enyl diphosphate</name>
        <dbReference type="ChEBI" id="CHEBI:128753"/>
    </ligand>
</feature>
<feature type="binding site" evidence="1">
    <location>
        <position position="41"/>
    </location>
    <ligand>
        <name>dimethylallyl diphosphate</name>
        <dbReference type="ChEBI" id="CHEBI:57623"/>
    </ligand>
</feature>
<feature type="binding site" evidence="1">
    <location>
        <position position="41"/>
    </location>
    <ligand>
        <name>isopentenyl diphosphate</name>
        <dbReference type="ChEBI" id="CHEBI:128769"/>
    </ligand>
</feature>
<feature type="binding site" evidence="1">
    <location>
        <position position="74"/>
    </location>
    <ligand>
        <name>(2E)-4-hydroxy-3-methylbut-2-enyl diphosphate</name>
        <dbReference type="ChEBI" id="CHEBI:128753"/>
    </ligand>
</feature>
<feature type="binding site" evidence="1">
    <location>
        <position position="74"/>
    </location>
    <ligand>
        <name>dimethylallyl diphosphate</name>
        <dbReference type="ChEBI" id="CHEBI:57623"/>
    </ligand>
</feature>
<feature type="binding site" evidence="1">
    <location>
        <position position="74"/>
    </location>
    <ligand>
        <name>isopentenyl diphosphate</name>
        <dbReference type="ChEBI" id="CHEBI:128769"/>
    </ligand>
</feature>
<feature type="binding site" evidence="1">
    <location>
        <position position="96"/>
    </location>
    <ligand>
        <name>[4Fe-4S] cluster</name>
        <dbReference type="ChEBI" id="CHEBI:49883"/>
    </ligand>
</feature>
<feature type="binding site" evidence="1">
    <location>
        <position position="124"/>
    </location>
    <ligand>
        <name>(2E)-4-hydroxy-3-methylbut-2-enyl diphosphate</name>
        <dbReference type="ChEBI" id="CHEBI:128753"/>
    </ligand>
</feature>
<feature type="binding site" evidence="1">
    <location>
        <position position="124"/>
    </location>
    <ligand>
        <name>dimethylallyl diphosphate</name>
        <dbReference type="ChEBI" id="CHEBI:57623"/>
    </ligand>
</feature>
<feature type="binding site" evidence="1">
    <location>
        <position position="124"/>
    </location>
    <ligand>
        <name>isopentenyl diphosphate</name>
        <dbReference type="ChEBI" id="CHEBI:128769"/>
    </ligand>
</feature>
<feature type="binding site" evidence="1">
    <location>
        <position position="167"/>
    </location>
    <ligand>
        <name>(2E)-4-hydroxy-3-methylbut-2-enyl diphosphate</name>
        <dbReference type="ChEBI" id="CHEBI:128753"/>
    </ligand>
</feature>
<feature type="binding site" evidence="1">
    <location>
        <position position="197"/>
    </location>
    <ligand>
        <name>[4Fe-4S] cluster</name>
        <dbReference type="ChEBI" id="CHEBI:49883"/>
    </ligand>
</feature>
<feature type="binding site" evidence="1">
    <location>
        <position position="225"/>
    </location>
    <ligand>
        <name>(2E)-4-hydroxy-3-methylbut-2-enyl diphosphate</name>
        <dbReference type="ChEBI" id="CHEBI:128753"/>
    </ligand>
</feature>
<feature type="binding site" evidence="1">
    <location>
        <position position="225"/>
    </location>
    <ligand>
        <name>dimethylallyl diphosphate</name>
        <dbReference type="ChEBI" id="CHEBI:57623"/>
    </ligand>
</feature>
<feature type="binding site" evidence="1">
    <location>
        <position position="225"/>
    </location>
    <ligand>
        <name>isopentenyl diphosphate</name>
        <dbReference type="ChEBI" id="CHEBI:128769"/>
    </ligand>
</feature>
<feature type="binding site" evidence="1">
    <location>
        <position position="226"/>
    </location>
    <ligand>
        <name>(2E)-4-hydroxy-3-methylbut-2-enyl diphosphate</name>
        <dbReference type="ChEBI" id="CHEBI:128753"/>
    </ligand>
</feature>
<feature type="binding site" evidence="1">
    <location>
        <position position="226"/>
    </location>
    <ligand>
        <name>dimethylallyl diphosphate</name>
        <dbReference type="ChEBI" id="CHEBI:57623"/>
    </ligand>
</feature>
<feature type="binding site" evidence="1">
    <location>
        <position position="226"/>
    </location>
    <ligand>
        <name>isopentenyl diphosphate</name>
        <dbReference type="ChEBI" id="CHEBI:128769"/>
    </ligand>
</feature>
<feature type="binding site" evidence="1">
    <location>
        <position position="227"/>
    </location>
    <ligand>
        <name>(2E)-4-hydroxy-3-methylbut-2-enyl diphosphate</name>
        <dbReference type="ChEBI" id="CHEBI:128753"/>
    </ligand>
</feature>
<feature type="binding site" evidence="1">
    <location>
        <position position="227"/>
    </location>
    <ligand>
        <name>dimethylallyl diphosphate</name>
        <dbReference type="ChEBI" id="CHEBI:57623"/>
    </ligand>
</feature>
<feature type="binding site" evidence="1">
    <location>
        <position position="227"/>
    </location>
    <ligand>
        <name>isopentenyl diphosphate</name>
        <dbReference type="ChEBI" id="CHEBI:128769"/>
    </ligand>
</feature>
<feature type="binding site" evidence="1">
    <location>
        <position position="269"/>
    </location>
    <ligand>
        <name>(2E)-4-hydroxy-3-methylbut-2-enyl diphosphate</name>
        <dbReference type="ChEBI" id="CHEBI:128753"/>
    </ligand>
</feature>
<feature type="binding site" evidence="1">
    <location>
        <position position="269"/>
    </location>
    <ligand>
        <name>dimethylallyl diphosphate</name>
        <dbReference type="ChEBI" id="CHEBI:57623"/>
    </ligand>
</feature>
<feature type="binding site" evidence="1">
    <location>
        <position position="269"/>
    </location>
    <ligand>
        <name>isopentenyl diphosphate</name>
        <dbReference type="ChEBI" id="CHEBI:128769"/>
    </ligand>
</feature>
<accession>C0Q4I9</accession>
<reference key="1">
    <citation type="journal article" date="2009" name="PLoS ONE">
        <title>Salmonella paratyphi C: genetic divergence from Salmonella choleraesuis and pathogenic convergence with Salmonella typhi.</title>
        <authorList>
            <person name="Liu W.-Q."/>
            <person name="Feng Y."/>
            <person name="Wang Y."/>
            <person name="Zou Q.-H."/>
            <person name="Chen F."/>
            <person name="Guo J.-T."/>
            <person name="Peng Y.-H."/>
            <person name="Jin Y."/>
            <person name="Li Y.-G."/>
            <person name="Hu S.-N."/>
            <person name="Johnston R.N."/>
            <person name="Liu G.-R."/>
            <person name="Liu S.-L."/>
        </authorList>
    </citation>
    <scope>NUCLEOTIDE SEQUENCE [LARGE SCALE GENOMIC DNA]</scope>
    <source>
        <strain>RKS4594</strain>
    </source>
</reference>
<keyword id="KW-0004">4Fe-4S</keyword>
<keyword id="KW-0408">Iron</keyword>
<keyword id="KW-0411">Iron-sulfur</keyword>
<keyword id="KW-0414">Isoprene biosynthesis</keyword>
<keyword id="KW-0479">Metal-binding</keyword>
<keyword id="KW-0560">Oxidoreductase</keyword>
<proteinExistence type="inferred from homology"/>
<organism>
    <name type="scientific">Salmonella paratyphi C (strain RKS4594)</name>
    <dbReference type="NCBI Taxonomy" id="476213"/>
    <lineage>
        <taxon>Bacteria</taxon>
        <taxon>Pseudomonadati</taxon>
        <taxon>Pseudomonadota</taxon>
        <taxon>Gammaproteobacteria</taxon>
        <taxon>Enterobacterales</taxon>
        <taxon>Enterobacteriaceae</taxon>
        <taxon>Salmonella</taxon>
    </lineage>
</organism>
<protein>
    <recommendedName>
        <fullName evidence="1">4-hydroxy-3-methylbut-2-enyl diphosphate reductase</fullName>
        <shortName evidence="1">HMBPP reductase</shortName>
        <ecNumber evidence="1">1.17.7.4</ecNumber>
    </recommendedName>
</protein>
<evidence type="ECO:0000255" key="1">
    <source>
        <dbReference type="HAMAP-Rule" id="MF_00191"/>
    </source>
</evidence>
<comment type="function">
    <text evidence="1">Catalyzes the conversion of 1-hydroxy-2-methyl-2-(E)-butenyl 4-diphosphate (HMBPP) into a mixture of isopentenyl diphosphate (IPP) and dimethylallyl diphosphate (DMAPP). Acts in the terminal step of the DOXP/MEP pathway for isoprenoid precursor biosynthesis.</text>
</comment>
<comment type="catalytic activity">
    <reaction evidence="1">
        <text>isopentenyl diphosphate + 2 oxidized [2Fe-2S]-[ferredoxin] + H2O = (2E)-4-hydroxy-3-methylbut-2-enyl diphosphate + 2 reduced [2Fe-2S]-[ferredoxin] + 2 H(+)</text>
        <dbReference type="Rhea" id="RHEA:24488"/>
        <dbReference type="Rhea" id="RHEA-COMP:10000"/>
        <dbReference type="Rhea" id="RHEA-COMP:10001"/>
        <dbReference type="ChEBI" id="CHEBI:15377"/>
        <dbReference type="ChEBI" id="CHEBI:15378"/>
        <dbReference type="ChEBI" id="CHEBI:33737"/>
        <dbReference type="ChEBI" id="CHEBI:33738"/>
        <dbReference type="ChEBI" id="CHEBI:128753"/>
        <dbReference type="ChEBI" id="CHEBI:128769"/>
        <dbReference type="EC" id="1.17.7.4"/>
    </reaction>
</comment>
<comment type="catalytic activity">
    <reaction evidence="1">
        <text>dimethylallyl diphosphate + 2 oxidized [2Fe-2S]-[ferredoxin] + H2O = (2E)-4-hydroxy-3-methylbut-2-enyl diphosphate + 2 reduced [2Fe-2S]-[ferredoxin] + 2 H(+)</text>
        <dbReference type="Rhea" id="RHEA:24825"/>
        <dbReference type="Rhea" id="RHEA-COMP:10000"/>
        <dbReference type="Rhea" id="RHEA-COMP:10001"/>
        <dbReference type="ChEBI" id="CHEBI:15377"/>
        <dbReference type="ChEBI" id="CHEBI:15378"/>
        <dbReference type="ChEBI" id="CHEBI:33737"/>
        <dbReference type="ChEBI" id="CHEBI:33738"/>
        <dbReference type="ChEBI" id="CHEBI:57623"/>
        <dbReference type="ChEBI" id="CHEBI:128753"/>
        <dbReference type="EC" id="1.17.7.4"/>
    </reaction>
</comment>
<comment type="cofactor">
    <cofactor evidence="1">
        <name>[4Fe-4S] cluster</name>
        <dbReference type="ChEBI" id="CHEBI:49883"/>
    </cofactor>
    <text evidence="1">Binds 1 [4Fe-4S] cluster per subunit.</text>
</comment>
<comment type="pathway">
    <text evidence="1">Isoprenoid biosynthesis; dimethylallyl diphosphate biosynthesis; dimethylallyl diphosphate from (2E)-4-hydroxy-3-methylbutenyl diphosphate: step 1/1.</text>
</comment>
<comment type="pathway">
    <text evidence="1">Isoprenoid biosynthesis; isopentenyl diphosphate biosynthesis via DXP pathway; isopentenyl diphosphate from 1-deoxy-D-xylulose 5-phosphate: step 6/6.</text>
</comment>
<comment type="subunit">
    <text evidence="1">Homodimer.</text>
</comment>
<comment type="similarity">
    <text evidence="1">Belongs to the IspH family.</text>
</comment>
<dbReference type="EC" id="1.17.7.4" evidence="1"/>
<dbReference type="EMBL" id="CP000857">
    <property type="protein sequence ID" value="ACN44244.1"/>
    <property type="molecule type" value="Genomic_DNA"/>
</dbReference>
<dbReference type="RefSeq" id="WP_001166425.1">
    <property type="nucleotide sequence ID" value="NC_012125.1"/>
</dbReference>
<dbReference type="SMR" id="C0Q4I9"/>
<dbReference type="KEGG" id="sei:SPC_0052"/>
<dbReference type="HOGENOM" id="CLU_027486_1_0_6"/>
<dbReference type="UniPathway" id="UPA00056">
    <property type="reaction ID" value="UER00097"/>
</dbReference>
<dbReference type="UniPathway" id="UPA00059">
    <property type="reaction ID" value="UER00105"/>
</dbReference>
<dbReference type="Proteomes" id="UP000001599">
    <property type="component" value="Chromosome"/>
</dbReference>
<dbReference type="GO" id="GO:0051539">
    <property type="term" value="F:4 iron, 4 sulfur cluster binding"/>
    <property type="evidence" value="ECO:0007669"/>
    <property type="project" value="UniProtKB-UniRule"/>
</dbReference>
<dbReference type="GO" id="GO:0051745">
    <property type="term" value="F:4-hydroxy-3-methylbut-2-enyl diphosphate reductase activity"/>
    <property type="evidence" value="ECO:0007669"/>
    <property type="project" value="UniProtKB-UniRule"/>
</dbReference>
<dbReference type="GO" id="GO:0046872">
    <property type="term" value="F:metal ion binding"/>
    <property type="evidence" value="ECO:0007669"/>
    <property type="project" value="UniProtKB-KW"/>
</dbReference>
<dbReference type="GO" id="GO:0050992">
    <property type="term" value="P:dimethylallyl diphosphate biosynthetic process"/>
    <property type="evidence" value="ECO:0007669"/>
    <property type="project" value="UniProtKB-UniRule"/>
</dbReference>
<dbReference type="GO" id="GO:0019288">
    <property type="term" value="P:isopentenyl diphosphate biosynthetic process, methylerythritol 4-phosphate pathway"/>
    <property type="evidence" value="ECO:0007669"/>
    <property type="project" value="UniProtKB-UniRule"/>
</dbReference>
<dbReference type="GO" id="GO:0016114">
    <property type="term" value="P:terpenoid biosynthetic process"/>
    <property type="evidence" value="ECO:0007669"/>
    <property type="project" value="UniProtKB-UniRule"/>
</dbReference>
<dbReference type="CDD" id="cd13944">
    <property type="entry name" value="lytB_ispH"/>
    <property type="match status" value="1"/>
</dbReference>
<dbReference type="FunFam" id="3.40.1010.20:FF:000001">
    <property type="entry name" value="4-hydroxy-3-methylbut-2-enyl diphosphate reductase"/>
    <property type="match status" value="1"/>
</dbReference>
<dbReference type="FunFam" id="3.40.50.11270:FF:000001">
    <property type="entry name" value="4-hydroxy-3-methylbut-2-enyl diphosphate reductase"/>
    <property type="match status" value="1"/>
</dbReference>
<dbReference type="Gene3D" id="3.40.50.11270">
    <property type="match status" value="1"/>
</dbReference>
<dbReference type="Gene3D" id="3.40.1010.20">
    <property type="entry name" value="4-hydroxy-3-methylbut-2-enyl diphosphate reductase, catalytic domain"/>
    <property type="match status" value="2"/>
</dbReference>
<dbReference type="HAMAP" id="MF_00191">
    <property type="entry name" value="IspH"/>
    <property type="match status" value="1"/>
</dbReference>
<dbReference type="InterPro" id="IPR003451">
    <property type="entry name" value="LytB/IspH"/>
</dbReference>
<dbReference type="NCBIfam" id="TIGR00216">
    <property type="entry name" value="ispH_lytB"/>
    <property type="match status" value="1"/>
</dbReference>
<dbReference type="NCBIfam" id="NF002188">
    <property type="entry name" value="PRK01045.1-2"/>
    <property type="match status" value="1"/>
</dbReference>
<dbReference type="NCBIfam" id="NF002190">
    <property type="entry name" value="PRK01045.1-4"/>
    <property type="match status" value="1"/>
</dbReference>
<dbReference type="PANTHER" id="PTHR30426">
    <property type="entry name" value="4-HYDROXY-3-METHYLBUT-2-ENYL DIPHOSPHATE REDUCTASE"/>
    <property type="match status" value="1"/>
</dbReference>
<dbReference type="PANTHER" id="PTHR30426:SF0">
    <property type="entry name" value="4-HYDROXY-3-METHYLBUT-2-ENYL DIPHOSPHATE REDUCTASE"/>
    <property type="match status" value="1"/>
</dbReference>
<dbReference type="Pfam" id="PF02401">
    <property type="entry name" value="LYTB"/>
    <property type="match status" value="1"/>
</dbReference>